<keyword id="KW-0007">Acetylation</keyword>
<keyword id="KW-0012">Acyltransferase</keyword>
<keyword id="KW-0156">Chromatin regulator</keyword>
<keyword id="KW-0903">Direct protein sequencing</keyword>
<keyword id="KW-0479">Metal-binding</keyword>
<keyword id="KW-0539">Nucleus</keyword>
<keyword id="KW-1185">Reference proteome</keyword>
<keyword id="KW-0804">Transcription</keyword>
<keyword id="KW-0805">Transcription regulation</keyword>
<keyword id="KW-0808">Transferase</keyword>
<keyword id="KW-0862">Zinc</keyword>
<keyword id="KW-0863">Zinc-finger</keyword>
<proteinExistence type="evidence at protein level"/>
<organism>
    <name type="scientific">Saccharomyces cerevisiae (strain ATCC 204508 / S288c)</name>
    <name type="common">Baker's yeast</name>
    <dbReference type="NCBI Taxonomy" id="559292"/>
    <lineage>
        <taxon>Eukaryota</taxon>
        <taxon>Fungi</taxon>
        <taxon>Dikarya</taxon>
        <taxon>Ascomycota</taxon>
        <taxon>Saccharomycotina</taxon>
        <taxon>Saccharomycetes</taxon>
        <taxon>Saccharomycetales</taxon>
        <taxon>Saccharomycetaceae</taxon>
        <taxon>Saccharomyces</taxon>
    </lineage>
</organism>
<reference key="1">
    <citation type="journal article" date="1993" name="Yeast">
        <title>Sequencing and functional analysis of a 32,560 bp segment on the left arm of yeast chromosome II. Identification of 26 open reading frames, including the KIP1 and SEC17 genes.</title>
        <authorList>
            <person name="Scherens B."/>
            <person name="el Bakkoury M."/>
            <person name="Vierendeels F."/>
            <person name="Dubois E."/>
            <person name="Messenguy F."/>
        </authorList>
    </citation>
    <scope>NUCLEOTIDE SEQUENCE [GENOMIC DNA]</scope>
    <source>
        <strain>ATCC 204508 / S288c</strain>
    </source>
</reference>
<reference key="2">
    <citation type="journal article" date="1994" name="EMBO J.">
        <title>Complete DNA sequence of yeast chromosome II.</title>
        <authorList>
            <person name="Feldmann H."/>
            <person name="Aigle M."/>
            <person name="Aljinovic G."/>
            <person name="Andre B."/>
            <person name="Baclet M.C."/>
            <person name="Barthe C."/>
            <person name="Baur A."/>
            <person name="Becam A.-M."/>
            <person name="Biteau N."/>
            <person name="Boles E."/>
            <person name="Brandt T."/>
            <person name="Brendel M."/>
            <person name="Brueckner M."/>
            <person name="Bussereau F."/>
            <person name="Christiansen C."/>
            <person name="Contreras R."/>
            <person name="Crouzet M."/>
            <person name="Cziepluch C."/>
            <person name="Demolis N."/>
            <person name="Delaveau T."/>
            <person name="Doignon F."/>
            <person name="Domdey H."/>
            <person name="Duesterhus S."/>
            <person name="Dubois E."/>
            <person name="Dujon B."/>
            <person name="El Bakkoury M."/>
            <person name="Entian K.-D."/>
            <person name="Feuermann M."/>
            <person name="Fiers W."/>
            <person name="Fobo G.M."/>
            <person name="Fritz C."/>
            <person name="Gassenhuber J."/>
            <person name="Glansdorff N."/>
            <person name="Goffeau A."/>
            <person name="Grivell L.A."/>
            <person name="de Haan M."/>
            <person name="Hein C."/>
            <person name="Herbert C.J."/>
            <person name="Hollenberg C.P."/>
            <person name="Holmstroem K."/>
            <person name="Jacq C."/>
            <person name="Jacquet M."/>
            <person name="Jauniaux J.-C."/>
            <person name="Jonniaux J.-L."/>
            <person name="Kallesoee T."/>
            <person name="Kiesau P."/>
            <person name="Kirchrath L."/>
            <person name="Koetter P."/>
            <person name="Korol S."/>
            <person name="Liebl S."/>
            <person name="Logghe M."/>
            <person name="Lohan A.J.E."/>
            <person name="Louis E.J."/>
            <person name="Li Z.Y."/>
            <person name="Maat M.J."/>
            <person name="Mallet L."/>
            <person name="Mannhaupt G."/>
            <person name="Messenguy F."/>
            <person name="Miosga T."/>
            <person name="Molemans F."/>
            <person name="Mueller S."/>
            <person name="Nasr F."/>
            <person name="Obermaier B."/>
            <person name="Perea J."/>
            <person name="Pierard A."/>
            <person name="Piravandi E."/>
            <person name="Pohl F.M."/>
            <person name="Pohl T.M."/>
            <person name="Potier S."/>
            <person name="Proft M."/>
            <person name="Purnelle B."/>
            <person name="Ramezani Rad M."/>
            <person name="Rieger M."/>
            <person name="Rose M."/>
            <person name="Schaaff-Gerstenschlaeger I."/>
            <person name="Scherens B."/>
            <person name="Schwarzlose C."/>
            <person name="Skala J."/>
            <person name="Slonimski P.P."/>
            <person name="Smits P.H.M."/>
            <person name="Souciet J.-L."/>
            <person name="Steensma H.Y."/>
            <person name="Stucka R."/>
            <person name="Urrestarazu L.A."/>
            <person name="van der Aart Q.J.M."/>
            <person name="Van Dyck L."/>
            <person name="Vassarotti A."/>
            <person name="Vetter I."/>
            <person name="Vierendeels F."/>
            <person name="Vissers S."/>
            <person name="Wagner G."/>
            <person name="de Wergifosse P."/>
            <person name="Wolfe K.H."/>
            <person name="Zagulski M."/>
            <person name="Zimmermann F.K."/>
            <person name="Mewes H.-W."/>
            <person name="Kleine K."/>
        </authorList>
    </citation>
    <scope>NUCLEOTIDE SEQUENCE [LARGE SCALE GENOMIC DNA]</scope>
    <source>
        <strain>ATCC 204508 / S288c</strain>
    </source>
</reference>
<reference key="3">
    <citation type="journal article" date="2014" name="G3 (Bethesda)">
        <title>The reference genome sequence of Saccharomyces cerevisiae: Then and now.</title>
        <authorList>
            <person name="Engel S.R."/>
            <person name="Dietrich F.S."/>
            <person name="Fisk D.G."/>
            <person name="Binkley G."/>
            <person name="Balakrishnan R."/>
            <person name="Costanzo M.C."/>
            <person name="Dwight S.S."/>
            <person name="Hitz B.C."/>
            <person name="Karra K."/>
            <person name="Nash R.S."/>
            <person name="Weng S."/>
            <person name="Wong E.D."/>
            <person name="Lloyd P."/>
            <person name="Skrzypek M.S."/>
            <person name="Miyasato S.R."/>
            <person name="Simison M."/>
            <person name="Cherry J.M."/>
        </authorList>
    </citation>
    <scope>GENOME REANNOTATION</scope>
    <source>
        <strain>ATCC 204508 / S288c</strain>
    </source>
</reference>
<reference key="4">
    <citation type="journal article" date="2000" name="Genes Dev.">
        <title>The something about silencing protein, Sas3, is the catalytic subunit of NuA3, a yTAF(II)30-containing HAT complex that interacts with the Spt16 subunit of the yeast CP (Cdc68/Pob3)-FACT complex.</title>
        <authorList>
            <person name="John S."/>
            <person name="Howe L."/>
            <person name="Tafrov S.T."/>
            <person name="Grant P.A."/>
            <person name="Sternglanz R."/>
            <person name="Workman J.L."/>
        </authorList>
    </citation>
    <scope>PROTEIN SEQUENCE OF 799-813</scope>
    <scope>FUNCTION</scope>
    <scope>CATALYTIC ACTIVITY</scope>
    <scope>INTERACTION WITH SPT16</scope>
    <scope>MUTAGENESIS OF 426-GLN-ARG-427; 429-GLY--GLY-431 AND 434-LEU-MET-435</scope>
</reference>
<reference key="5">
    <citation type="journal article" date="1996" name="Nat. Genet.">
        <title>Yeast SAS silencing genes and human genes associated with AML and HIV-1 Tat interactions are homologous with acetyltransferases.</title>
        <authorList>
            <person name="Reifsnyder C."/>
            <person name="Lowell J."/>
            <person name="Clarke A."/>
            <person name="Pillus L."/>
        </authorList>
    </citation>
    <scope>FUNCTION</scope>
</reference>
<reference key="6">
    <citation type="journal article" date="1997" name="Nat. Genet.">
        <authorList>
            <person name="Reifsnyder C."/>
            <person name="Lowell J."/>
            <person name="Clarke A."/>
            <person name="Pillus L."/>
        </authorList>
    </citation>
    <scope>ERRATUM OF PUBMED:8782818</scope>
</reference>
<reference key="7">
    <citation type="journal article" date="1999" name="Biochem. Biophys. Res. Commun.">
        <title>Sas3 is a histone acetyltransferase and requires a zinc finger motif.</title>
        <authorList>
            <person name="Takechi S."/>
            <person name="Nakayama T."/>
        </authorList>
    </citation>
    <scope>FUNCTION</scope>
    <scope>CATALYTIC ACTIVITY</scope>
    <scope>MUTAGENESIS OF CYS-303; CYS-306; HIS-319 AND CYS-323</scope>
</reference>
<reference key="8">
    <citation type="journal article" date="2001" name="Genes Dev.">
        <title>Histone H3 specific acetyltransferases are essential for cell cycle progression.</title>
        <authorList>
            <person name="Howe L."/>
            <person name="Auston D."/>
            <person name="Grant P."/>
            <person name="John S."/>
            <person name="Cook R.G."/>
            <person name="Workman J.L."/>
            <person name="Pillus L."/>
        </authorList>
    </citation>
    <scope>FUNCTION</scope>
</reference>
<reference key="9">
    <citation type="journal article" date="2003" name="Nature">
        <title>Global analysis of protein localization in budding yeast.</title>
        <authorList>
            <person name="Huh W.-K."/>
            <person name="Falvo J.V."/>
            <person name="Gerke L.C."/>
            <person name="Carroll A.S."/>
            <person name="Howson R.W."/>
            <person name="Weissman J.S."/>
            <person name="O'Shea E.K."/>
        </authorList>
    </citation>
    <scope>SUBCELLULAR LOCATION [LARGE SCALE ANALYSIS]</scope>
</reference>
<reference key="10">
    <citation type="journal article" date="2006" name="Mol. Cell. Biol.">
        <title>Methylation of histone H3 mediates the association of the NuA3 histone acetyltransferase with chromatin.</title>
        <authorList>
            <person name="Martin D.G."/>
            <person name="Grimes D.E."/>
            <person name="Baetz K."/>
            <person name="Howe L."/>
        </authorList>
    </citation>
    <scope>FUNCTION OF THE NUA3 COMPLEX</scope>
</reference>
<reference key="11">
    <citation type="journal article" date="2006" name="Mol. Cell">
        <title>Yng1 PHD finger binding to H3 trimethylated at K4 promotes NuA3 HAT activity at K14 of H3 and transcription at a subset of targeted ORFs.</title>
        <authorList>
            <person name="Taverna S.D."/>
            <person name="Ilin S."/>
            <person name="Rogers R.S."/>
            <person name="Tanny J.C."/>
            <person name="Lavender H."/>
            <person name="Li H."/>
            <person name="Baker L."/>
            <person name="Boyle J."/>
            <person name="Blair L.P."/>
            <person name="Chait B.T."/>
            <person name="Patel D.J."/>
            <person name="Aitchison J.D."/>
            <person name="Tackett A.J."/>
            <person name="Allis C.D."/>
        </authorList>
    </citation>
    <scope>FUNCTION OF THE NUA3 COMPLEX</scope>
    <scope>IDENTIFICATION IN THE NUA3 COMPLEX</scope>
    <scope>IDENTIFICATION BY MASS SPECTROMETRY</scope>
</reference>
<reference key="12">
    <citation type="journal article" date="2014" name="Mol. Cell. Proteomics">
        <title>A PWWP domain-containing protein targets the NuA3 acetyltransferase complex via histone H3 lysine 36 trimethylation to coordinate transcriptional elongation at coding regions.</title>
        <authorList>
            <person name="Gilbert T.M."/>
            <person name="McDaniel S.L."/>
            <person name="Byrum S.D."/>
            <person name="Cades J.A."/>
            <person name="Dancy B.C."/>
            <person name="Wade H."/>
            <person name="Tackett A.J."/>
            <person name="Strahl B.D."/>
            <person name="Taverna S.D."/>
        </authorList>
    </citation>
    <scope>SUBUNIT</scope>
</reference>
<accession>P34218</accession>
<accession>D6VPU7</accession>
<name>SAS3_YEAST</name>
<comment type="function">
    <text evidence="4 5 6 8 9 10 11">Catalytic component of the NuA3 histone acetyltransferase complex, that acetylates H3K14 (PubMed:10600516, PubMed:10817755, PubMed:11731478, PubMed:16581777, PubMed:17157260, PubMed:25104842). The NuA3 HAT complex has 2 functionally distinct forms. NuA3a binds H3K4me3, through the PHD finger of YNG1, and acetylates H3K14 at the promoter region of actively transcribed genes to promote transcription initiation. NuA3b binds H3K36me3 at the coding regions of actively transcribed genes, through the PWWP domain of PDP3, and coordinates transcription elongation (PubMed:17157260, PubMed:25104842). In vitro, SAS3 acetylates free histones H3 and H4 (PubMed:10600516). It is involved in silencing the HMR locus (PubMed:16581777, PubMed:8782818).</text>
</comment>
<comment type="catalytic activity">
    <reaction evidence="4 5">
        <text>L-lysyl-[protein] + acetyl-CoA = N(6)-acetyl-L-lysyl-[protein] + CoA + H(+)</text>
        <dbReference type="Rhea" id="RHEA:45948"/>
        <dbReference type="Rhea" id="RHEA-COMP:9752"/>
        <dbReference type="Rhea" id="RHEA-COMP:10731"/>
        <dbReference type="ChEBI" id="CHEBI:15378"/>
        <dbReference type="ChEBI" id="CHEBI:29969"/>
        <dbReference type="ChEBI" id="CHEBI:57287"/>
        <dbReference type="ChEBI" id="CHEBI:57288"/>
        <dbReference type="ChEBI" id="CHEBI:61930"/>
        <dbReference type="EC" id="2.3.1.48"/>
    </reaction>
</comment>
<comment type="subunit">
    <text evidence="5 9 10">Component of the NuA3 histone acetyltransferase (HAT) complex (PubMed:17157260). The NuA3 HAT complex has 2 functionally distinct forms that participate in transcription (PubMed:25104842). The NuA3a HAT complex is composed of at least NTO1, SAS3, TAF14, YNG1 and EAF6 (PubMed:17157260). The NuA3b HAT complex contains an additional subunit, PDP3 (PubMed:25104842). SAS3 interacts with CDC68/SPT16 (PubMed:10817755).</text>
</comment>
<comment type="interaction">
    <interactant intactId="EBI-16484">
        <id>P34218</id>
    </interactant>
    <interactant intactId="EBI-4334">
        <id>P32558</id>
        <label>SPT16</label>
    </interactant>
    <organismsDiffer>false</organismsDiffer>
    <experiments>2</experiments>
</comment>
<comment type="interaction">
    <interactant intactId="EBI-16484">
        <id>P34218</id>
    </interactant>
    <interactant intactId="EBI-18920">
        <id>P35189</id>
        <label>TAF14</label>
    </interactant>
    <organismsDiffer>false</organismsDiffer>
    <experiments>3</experiments>
</comment>
<comment type="interaction">
    <interactant intactId="EBI-16484">
        <id>P34218</id>
    </interactant>
    <interactant intactId="EBI-31890">
        <id>Q08465</id>
        <label>YNG1</label>
    </interactant>
    <organismsDiffer>false</organismsDiffer>
    <experiments>5</experiments>
</comment>
<comment type="subcellular location">
    <subcellularLocation>
        <location evidence="7">Nucleus</location>
    </subcellularLocation>
</comment>
<comment type="PTM">
    <text evidence="1">Autoacetylation at Lys-367 is required for proper function.</text>
</comment>
<comment type="similarity">
    <text evidence="14">Belongs to the MYST (SAS/MOZ) family.</text>
</comment>
<sequence>MSLTANDESPKPKKNALLKNLEIDDLIHSQFVRSDTNGHRTTRRLFNSDASISHRIRGSVRSDKGLNKIKKGLISQQSKLASENSSQNIVNRDNKMGAVSFPIIEPNIEVSEELKVRIKYDSIKFFNFERLISKSSVIAPLVNKNITSSGPLIGFQRRVNRLKQTWDLATENMEYPYSSDNTPFRDNDSWQWYVPYGGTIKKMKDFSTKRTLPTWEDKIKFLTFLENSKSATYINGNVSLCNHNETDQENEDRKKRKGKVPRIKNKVWFSQIEYIVLRNYEIKPWYTSPFPEHINQNKMVFICEFCLKYMTSRYTFYRHQLKCLTFKPPGNEIYRDGKLSVWEIDGRENVLYCQNLCLLAKCFINSKTLYYDVEPFIFYILTEREDTENHPYQNAAKFHFVGYFSKEKFNSNDYNLSCILTLPIYQRKGYGQFLMEFSYLLSRKESKFGTPEKPLSDLGLLTYRTFWKIKCAEVLLKLRDSARRRSNNKNEDTFQQVSLNDIAKLTGMIPTDVVFGLEQLQVLYRHKTRSLSSLDDFNYIIKIDSWNRIENIYKTWSSKNYPRVKYDKLLWEPIILGPSFGINGMMNLEPTALADEALTNETMAPVISNNTHIENYNNSRAHNKRRRRRRRSSEHKTSKLHVNNIIEPEVPATDFFEDTVSSLTEYMCDYKNTNNDRLIYQAEKRVLESIHDRKGIPRSKFSTETHWELCFTIKNSETPLGNHAARRNDTGISSLEQDEVENDVDTELYVGENAKEDEDEDEDFTLDDDIEDEQISEENDEEEDTYEEDSDDDEDGKRKGQEQDENDIESHIRKERVRKRRKITLIEDDEE</sequence>
<protein>
    <recommendedName>
        <fullName>Histone acetyltransferase SAS3</fullName>
        <ecNumber evidence="4 5">2.3.1.48</ecNumber>
    </recommendedName>
    <alternativeName>
        <fullName evidence="12">Something about silencing protein 3</fullName>
    </alternativeName>
</protein>
<feature type="chain" id="PRO_0000051579" description="Histone acetyltransferase SAS3">
    <location>
        <begin position="1"/>
        <end position="831"/>
    </location>
</feature>
<feature type="domain" description="MYST-type HAT" evidence="2">
    <location>
        <begin position="267"/>
        <end position="573"/>
    </location>
</feature>
<feature type="zinc finger region" description="C2HC MYST-type" evidence="2">
    <location>
        <begin position="300"/>
        <end position="325"/>
    </location>
</feature>
<feature type="region of interest" description="Disordered" evidence="3">
    <location>
        <begin position="614"/>
        <end position="639"/>
    </location>
</feature>
<feature type="region of interest" description="Disordered" evidence="3">
    <location>
        <begin position="719"/>
        <end position="813"/>
    </location>
</feature>
<feature type="compositionally biased region" description="Basic residues" evidence="3">
    <location>
        <begin position="621"/>
        <end position="633"/>
    </location>
</feature>
<feature type="compositionally biased region" description="Acidic residues" evidence="3">
    <location>
        <begin position="736"/>
        <end position="746"/>
    </location>
</feature>
<feature type="compositionally biased region" description="Acidic residues" evidence="3">
    <location>
        <begin position="755"/>
        <end position="794"/>
    </location>
</feature>
<feature type="compositionally biased region" description="Basic and acidic residues" evidence="3">
    <location>
        <begin position="795"/>
        <end position="812"/>
    </location>
</feature>
<feature type="active site" description="Proton donor/acceptor" evidence="1">
    <location>
        <position position="452"/>
    </location>
</feature>
<feature type="binding site" evidence="1">
    <location>
        <begin position="419"/>
        <end position="421"/>
    </location>
    <ligand>
        <name>acetyl-CoA</name>
        <dbReference type="ChEBI" id="CHEBI:57288"/>
    </ligand>
</feature>
<feature type="binding site" evidence="1">
    <location>
        <begin position="426"/>
        <end position="432"/>
    </location>
    <ligand>
        <name>acetyl-CoA</name>
        <dbReference type="ChEBI" id="CHEBI:57288"/>
    </ligand>
</feature>
<feature type="binding site" evidence="1">
    <location>
        <position position="456"/>
    </location>
    <ligand>
        <name>acetyl-CoA</name>
        <dbReference type="ChEBI" id="CHEBI:57288"/>
    </ligand>
</feature>
<feature type="modified residue" description="N6-acetyllysine; by autocatalysis" evidence="1">
    <location>
        <position position="367"/>
    </location>
</feature>
<feature type="mutagenesis site" description="Greatly diminishes HAT activity." evidence="4 5">
    <original>C</original>
    <variation>A</variation>
    <location>
        <position position="303"/>
    </location>
</feature>
<feature type="mutagenesis site" description="Greatly diminishes HAT activity." evidence="4 5">
    <original>C</original>
    <variation>A</variation>
    <location>
        <position position="306"/>
    </location>
</feature>
<feature type="mutagenesis site" description="Greatly diminishes HAT activity." evidence="4 5">
    <original>H</original>
    <variation>A</variation>
    <location>
        <position position="319"/>
    </location>
</feature>
<feature type="mutagenesis site" description="Abolishes HAT activity." evidence="4 5">
    <original>C</original>
    <variation>A</variation>
    <location>
        <position position="323"/>
    </location>
</feature>
<feature type="mutagenesis site" description="Loss of function." evidence="5">
    <original>QR</original>
    <variation>AA</variation>
    <location>
        <begin position="426"/>
        <end position="427"/>
    </location>
</feature>
<feature type="mutagenesis site" description="Loss of function." evidence="5">
    <original>GYG</original>
    <variation>AAA</variation>
    <location>
        <begin position="429"/>
        <end position="431"/>
    </location>
</feature>
<feature type="mutagenesis site" description="No effect." evidence="5">
    <original>LM</original>
    <variation>AA</variation>
    <location>
        <begin position="434"/>
        <end position="435"/>
    </location>
</feature>
<evidence type="ECO:0000250" key="1">
    <source>
        <dbReference type="UniProtKB" id="Q9H7Z6"/>
    </source>
</evidence>
<evidence type="ECO:0000255" key="2">
    <source>
        <dbReference type="PROSITE-ProRule" id="PRU01063"/>
    </source>
</evidence>
<evidence type="ECO:0000256" key="3">
    <source>
        <dbReference type="SAM" id="MobiDB-lite"/>
    </source>
</evidence>
<evidence type="ECO:0000269" key="4">
    <source>
    </source>
</evidence>
<evidence type="ECO:0000269" key="5">
    <source>
    </source>
</evidence>
<evidence type="ECO:0000269" key="6">
    <source>
    </source>
</evidence>
<evidence type="ECO:0000269" key="7">
    <source>
    </source>
</evidence>
<evidence type="ECO:0000269" key="8">
    <source>
    </source>
</evidence>
<evidence type="ECO:0000269" key="9">
    <source>
    </source>
</evidence>
<evidence type="ECO:0000269" key="10">
    <source>
    </source>
</evidence>
<evidence type="ECO:0000269" key="11">
    <source>
    </source>
</evidence>
<evidence type="ECO:0000303" key="12">
    <source>
    </source>
</evidence>
<evidence type="ECO:0000303" key="13">
    <source>
    </source>
</evidence>
<evidence type="ECO:0000305" key="14"/>
<dbReference type="EC" id="2.3.1.48" evidence="4 5"/>
<dbReference type="EMBL" id="Z23261">
    <property type="protein sequence ID" value="CAA80794.1"/>
    <property type="molecule type" value="Genomic_DNA"/>
</dbReference>
<dbReference type="EMBL" id="Z35814">
    <property type="protein sequence ID" value="CAA84873.1"/>
    <property type="molecule type" value="Genomic_DNA"/>
</dbReference>
<dbReference type="EMBL" id="BK006936">
    <property type="protein sequence ID" value="DAA07067.1"/>
    <property type="molecule type" value="Genomic_DNA"/>
</dbReference>
<dbReference type="PIR" id="S39835">
    <property type="entry name" value="S39835"/>
</dbReference>
<dbReference type="RefSeq" id="NP_009501.1">
    <property type="nucleotide sequence ID" value="NM_001178292.1"/>
</dbReference>
<dbReference type="SMR" id="P34218"/>
<dbReference type="BioGRID" id="32646">
    <property type="interactions" value="207"/>
</dbReference>
<dbReference type="ComplexPortal" id="CPX-1810">
    <property type="entry name" value="NuA3 histone acetyltransferase complex"/>
</dbReference>
<dbReference type="DIP" id="DIP-4277N"/>
<dbReference type="FunCoup" id="P34218">
    <property type="interactions" value="203"/>
</dbReference>
<dbReference type="IntAct" id="P34218">
    <property type="interactions" value="34"/>
</dbReference>
<dbReference type="MINT" id="P34218"/>
<dbReference type="STRING" id="4932.YBL052C"/>
<dbReference type="iPTMnet" id="P34218"/>
<dbReference type="PaxDb" id="4932-YBL052C"/>
<dbReference type="PeptideAtlas" id="P34218"/>
<dbReference type="DNASU" id="852228"/>
<dbReference type="EnsemblFungi" id="YBL052C_mRNA">
    <property type="protein sequence ID" value="YBL052C"/>
    <property type="gene ID" value="YBL052C"/>
</dbReference>
<dbReference type="GeneID" id="852228"/>
<dbReference type="KEGG" id="sce:YBL052C"/>
<dbReference type="AGR" id="SGD:S000000148"/>
<dbReference type="SGD" id="S000000148">
    <property type="gene designation" value="SAS3"/>
</dbReference>
<dbReference type="VEuPathDB" id="FungiDB:YBL052C"/>
<dbReference type="eggNOG" id="KOG2747">
    <property type="taxonomic scope" value="Eukaryota"/>
</dbReference>
<dbReference type="HOGENOM" id="CLU_014892_1_0_1"/>
<dbReference type="InParanoid" id="P34218"/>
<dbReference type="OMA" id="STETHWE"/>
<dbReference type="OrthoDB" id="787137at2759"/>
<dbReference type="BioCyc" id="YEAST:G3O-28951-MONOMER"/>
<dbReference type="BioGRID-ORCS" id="852228">
    <property type="hits" value="0 hits in 10 CRISPR screens"/>
</dbReference>
<dbReference type="PRO" id="PR:P34218"/>
<dbReference type="Proteomes" id="UP000002311">
    <property type="component" value="Chromosome II"/>
</dbReference>
<dbReference type="RNAct" id="P34218">
    <property type="molecule type" value="protein"/>
</dbReference>
<dbReference type="GO" id="GO:0000785">
    <property type="term" value="C:chromatin"/>
    <property type="evidence" value="ECO:0000318"/>
    <property type="project" value="GO_Central"/>
</dbReference>
<dbReference type="GO" id="GO:0000781">
    <property type="term" value="C:chromosome, telomeric region"/>
    <property type="evidence" value="ECO:0007669"/>
    <property type="project" value="GOC"/>
</dbReference>
<dbReference type="GO" id="GO:0033100">
    <property type="term" value="C:NuA3 histone acetyltransferase complex"/>
    <property type="evidence" value="ECO:0000314"/>
    <property type="project" value="SGD"/>
</dbReference>
<dbReference type="GO" id="GO:1990467">
    <property type="term" value="C:NuA3a histone acetyltransferase complex"/>
    <property type="evidence" value="ECO:0000314"/>
    <property type="project" value="SGD"/>
</dbReference>
<dbReference type="GO" id="GO:1990468">
    <property type="term" value="C:NuA3b histone acetyltransferase complex"/>
    <property type="evidence" value="ECO:0000314"/>
    <property type="project" value="SGD"/>
</dbReference>
<dbReference type="GO" id="GO:0005634">
    <property type="term" value="C:nucleus"/>
    <property type="evidence" value="ECO:0000318"/>
    <property type="project" value="GO_Central"/>
</dbReference>
<dbReference type="GO" id="GO:0003682">
    <property type="term" value="F:chromatin binding"/>
    <property type="evidence" value="ECO:0000318"/>
    <property type="project" value="GO_Central"/>
</dbReference>
<dbReference type="GO" id="GO:0004402">
    <property type="term" value="F:histone acetyltransferase activity"/>
    <property type="evidence" value="ECO:0000314"/>
    <property type="project" value="SGD"/>
</dbReference>
<dbReference type="GO" id="GO:0003712">
    <property type="term" value="F:transcription coregulator activity"/>
    <property type="evidence" value="ECO:0000318"/>
    <property type="project" value="GO_Central"/>
</dbReference>
<dbReference type="GO" id="GO:0008270">
    <property type="term" value="F:zinc ion binding"/>
    <property type="evidence" value="ECO:0007669"/>
    <property type="project" value="UniProtKB-KW"/>
</dbReference>
<dbReference type="GO" id="GO:0006351">
    <property type="term" value="P:DNA-templated transcription"/>
    <property type="evidence" value="ECO:0000303"/>
    <property type="project" value="ComplexPortal"/>
</dbReference>
<dbReference type="GO" id="GO:0006357">
    <property type="term" value="P:regulation of transcription by RNA polymerase II"/>
    <property type="evidence" value="ECO:0000318"/>
    <property type="project" value="GO_Central"/>
</dbReference>
<dbReference type="GO" id="GO:0030466">
    <property type="term" value="P:silent mating-type cassette heterochromatin formation"/>
    <property type="evidence" value="ECO:0000315"/>
    <property type="project" value="SGD"/>
</dbReference>
<dbReference type="GO" id="GO:0031509">
    <property type="term" value="P:subtelomeric heterochromatin formation"/>
    <property type="evidence" value="ECO:0000315"/>
    <property type="project" value="SGD"/>
</dbReference>
<dbReference type="FunFam" id="1.10.10.10:FF:000837">
    <property type="entry name" value="Histone acetyltransferase"/>
    <property type="match status" value="1"/>
</dbReference>
<dbReference type="FunFam" id="3.30.60.60:FF:000001">
    <property type="entry name" value="Histone acetyltransferase"/>
    <property type="match status" value="1"/>
</dbReference>
<dbReference type="FunFam" id="3.40.630.30:FF:000001">
    <property type="entry name" value="Histone acetyltransferase"/>
    <property type="match status" value="1"/>
</dbReference>
<dbReference type="Gene3D" id="3.40.630.30">
    <property type="match status" value="1"/>
</dbReference>
<dbReference type="Gene3D" id="3.30.60.60">
    <property type="entry name" value="N-acetyl transferase-like"/>
    <property type="match status" value="1"/>
</dbReference>
<dbReference type="Gene3D" id="1.10.10.10">
    <property type="entry name" value="Winged helix-like DNA-binding domain superfamily/Winged helix DNA-binding domain"/>
    <property type="match status" value="1"/>
</dbReference>
<dbReference type="InterPro" id="IPR016181">
    <property type="entry name" value="Acyl_CoA_acyltransferase"/>
</dbReference>
<dbReference type="InterPro" id="IPR002717">
    <property type="entry name" value="HAT_MYST-type"/>
</dbReference>
<dbReference type="InterPro" id="IPR050603">
    <property type="entry name" value="MYST_HAT"/>
</dbReference>
<dbReference type="InterPro" id="IPR036388">
    <property type="entry name" value="WH-like_DNA-bd_sf"/>
</dbReference>
<dbReference type="InterPro" id="IPR040706">
    <property type="entry name" value="Zf-MYST"/>
</dbReference>
<dbReference type="PANTHER" id="PTHR10615">
    <property type="entry name" value="HISTONE ACETYLTRANSFERASE"/>
    <property type="match status" value="1"/>
</dbReference>
<dbReference type="PANTHER" id="PTHR10615:SF161">
    <property type="entry name" value="HISTONE ACETYLTRANSFERASE KAT7"/>
    <property type="match status" value="1"/>
</dbReference>
<dbReference type="Pfam" id="PF01853">
    <property type="entry name" value="MOZ_SAS"/>
    <property type="match status" value="1"/>
</dbReference>
<dbReference type="Pfam" id="PF17772">
    <property type="entry name" value="zf-MYST"/>
    <property type="match status" value="1"/>
</dbReference>
<dbReference type="SUPFAM" id="SSF55729">
    <property type="entry name" value="Acyl-CoA N-acyltransferases (Nat)"/>
    <property type="match status" value="1"/>
</dbReference>
<dbReference type="PROSITE" id="PS51726">
    <property type="entry name" value="MYST_HAT"/>
    <property type="match status" value="1"/>
</dbReference>
<gene>
    <name evidence="13" type="primary">SAS3</name>
    <name type="ordered locus">YBL052C</name>
    <name type="ORF">YBL0507</name>
    <name type="ORF">YBL0515</name>
</gene>